<protein>
    <recommendedName>
        <fullName evidence="1">Aspartate 1-decarboxylase</fullName>
        <ecNumber evidence="1">4.1.1.11</ecNumber>
    </recommendedName>
    <alternativeName>
        <fullName evidence="1">Aspartate alpha-decarboxylase</fullName>
    </alternativeName>
    <component>
        <recommendedName>
            <fullName evidence="1">Aspartate 1-decarboxylase beta chain</fullName>
        </recommendedName>
    </component>
    <component>
        <recommendedName>
            <fullName evidence="1">Aspartate 1-decarboxylase alpha chain</fullName>
        </recommendedName>
    </component>
</protein>
<proteinExistence type="inferred from homology"/>
<comment type="function">
    <text evidence="1">Catalyzes the pyruvoyl-dependent decarboxylation of aspartate to produce beta-alanine.</text>
</comment>
<comment type="catalytic activity">
    <reaction evidence="1">
        <text>L-aspartate + H(+) = beta-alanine + CO2</text>
        <dbReference type="Rhea" id="RHEA:19497"/>
        <dbReference type="ChEBI" id="CHEBI:15378"/>
        <dbReference type="ChEBI" id="CHEBI:16526"/>
        <dbReference type="ChEBI" id="CHEBI:29991"/>
        <dbReference type="ChEBI" id="CHEBI:57966"/>
        <dbReference type="EC" id="4.1.1.11"/>
    </reaction>
</comment>
<comment type="cofactor">
    <cofactor evidence="1">
        <name>pyruvate</name>
        <dbReference type="ChEBI" id="CHEBI:15361"/>
    </cofactor>
    <text evidence="1">Binds 1 pyruvoyl group covalently per subunit.</text>
</comment>
<comment type="pathway">
    <text evidence="1">Cofactor biosynthesis; (R)-pantothenate biosynthesis; beta-alanine from L-aspartate: step 1/1.</text>
</comment>
<comment type="subunit">
    <text evidence="1">Heterooctamer of four alpha and four beta subunits.</text>
</comment>
<comment type="subcellular location">
    <subcellularLocation>
        <location evidence="1">Cytoplasm</location>
    </subcellularLocation>
</comment>
<comment type="PTM">
    <text evidence="1">Is synthesized initially as an inactive proenzyme, which is activated by self-cleavage at a specific serine bond to produce a beta-subunit with a hydroxyl group at its C-terminus and an alpha-subunit with a pyruvoyl group at its N-terminus.</text>
</comment>
<comment type="similarity">
    <text evidence="1">Belongs to the PanD family.</text>
</comment>
<feature type="chain" id="PRO_0000236887" description="Aspartate 1-decarboxylase beta chain" evidence="1">
    <location>
        <begin position="1"/>
        <end position="24"/>
    </location>
</feature>
<feature type="chain" id="PRO_0000236888" description="Aspartate 1-decarboxylase alpha chain" evidence="1">
    <location>
        <begin position="25"/>
        <end position="126"/>
    </location>
</feature>
<feature type="active site" description="Schiff-base intermediate with substrate; via pyruvic acid" evidence="1">
    <location>
        <position position="25"/>
    </location>
</feature>
<feature type="active site" description="Proton donor" evidence="1">
    <location>
        <position position="58"/>
    </location>
</feature>
<feature type="binding site" evidence="1">
    <location>
        <position position="57"/>
    </location>
    <ligand>
        <name>substrate</name>
    </ligand>
</feature>
<feature type="binding site" evidence="1">
    <location>
        <begin position="73"/>
        <end position="75"/>
    </location>
    <ligand>
        <name>substrate</name>
    </ligand>
</feature>
<feature type="modified residue" description="Pyruvic acid (Ser)" evidence="1">
    <location>
        <position position="25"/>
    </location>
</feature>
<keyword id="KW-0068">Autocatalytic cleavage</keyword>
<keyword id="KW-0963">Cytoplasm</keyword>
<keyword id="KW-0210">Decarboxylase</keyword>
<keyword id="KW-0456">Lyase</keyword>
<keyword id="KW-0566">Pantothenate biosynthesis</keyword>
<keyword id="KW-0670">Pyruvate</keyword>
<keyword id="KW-0704">Schiff base</keyword>
<keyword id="KW-0865">Zymogen</keyword>
<dbReference type="EC" id="4.1.1.11" evidence="1"/>
<dbReference type="EMBL" id="AE017220">
    <property type="protein sequence ID" value="AAX64086.1"/>
    <property type="molecule type" value="Genomic_DNA"/>
</dbReference>
<dbReference type="RefSeq" id="WP_000621526.1">
    <property type="nucleotide sequence ID" value="NC_006905.1"/>
</dbReference>
<dbReference type="SMR" id="Q57T75"/>
<dbReference type="GeneID" id="89550440"/>
<dbReference type="KEGG" id="sec:SCH_0180"/>
<dbReference type="HOGENOM" id="CLU_115305_2_1_6"/>
<dbReference type="UniPathway" id="UPA00028">
    <property type="reaction ID" value="UER00002"/>
</dbReference>
<dbReference type="Proteomes" id="UP000000538">
    <property type="component" value="Chromosome"/>
</dbReference>
<dbReference type="GO" id="GO:0005829">
    <property type="term" value="C:cytosol"/>
    <property type="evidence" value="ECO:0007669"/>
    <property type="project" value="TreeGrafter"/>
</dbReference>
<dbReference type="GO" id="GO:0004068">
    <property type="term" value="F:aspartate 1-decarboxylase activity"/>
    <property type="evidence" value="ECO:0007669"/>
    <property type="project" value="UniProtKB-UniRule"/>
</dbReference>
<dbReference type="GO" id="GO:0006523">
    <property type="term" value="P:alanine biosynthetic process"/>
    <property type="evidence" value="ECO:0007669"/>
    <property type="project" value="InterPro"/>
</dbReference>
<dbReference type="GO" id="GO:0015940">
    <property type="term" value="P:pantothenate biosynthetic process"/>
    <property type="evidence" value="ECO:0007669"/>
    <property type="project" value="UniProtKB-UniRule"/>
</dbReference>
<dbReference type="CDD" id="cd06919">
    <property type="entry name" value="Asp_decarbox"/>
    <property type="match status" value="1"/>
</dbReference>
<dbReference type="FunFam" id="2.40.40.20:FF:000004">
    <property type="entry name" value="Aspartate 1-decarboxylase"/>
    <property type="match status" value="1"/>
</dbReference>
<dbReference type="Gene3D" id="2.40.40.20">
    <property type="match status" value="1"/>
</dbReference>
<dbReference type="HAMAP" id="MF_00446">
    <property type="entry name" value="PanD"/>
    <property type="match status" value="1"/>
</dbReference>
<dbReference type="InterPro" id="IPR009010">
    <property type="entry name" value="Asp_de-COase-like_dom_sf"/>
</dbReference>
<dbReference type="InterPro" id="IPR003190">
    <property type="entry name" value="Asp_decarbox"/>
</dbReference>
<dbReference type="NCBIfam" id="TIGR00223">
    <property type="entry name" value="panD"/>
    <property type="match status" value="1"/>
</dbReference>
<dbReference type="PANTHER" id="PTHR21012">
    <property type="entry name" value="ASPARTATE 1-DECARBOXYLASE"/>
    <property type="match status" value="1"/>
</dbReference>
<dbReference type="PANTHER" id="PTHR21012:SF0">
    <property type="entry name" value="ASPARTATE 1-DECARBOXYLASE"/>
    <property type="match status" value="1"/>
</dbReference>
<dbReference type="Pfam" id="PF02261">
    <property type="entry name" value="Asp_decarbox"/>
    <property type="match status" value="1"/>
</dbReference>
<dbReference type="PIRSF" id="PIRSF006246">
    <property type="entry name" value="Asp_decarbox"/>
    <property type="match status" value="1"/>
</dbReference>
<dbReference type="SUPFAM" id="SSF50692">
    <property type="entry name" value="ADC-like"/>
    <property type="match status" value="1"/>
</dbReference>
<gene>
    <name evidence="1" type="primary">panD</name>
    <name type="ordered locus">SCH_0180</name>
</gene>
<reference key="1">
    <citation type="journal article" date="2005" name="Nucleic Acids Res.">
        <title>The genome sequence of Salmonella enterica serovar Choleraesuis, a highly invasive and resistant zoonotic pathogen.</title>
        <authorList>
            <person name="Chiu C.-H."/>
            <person name="Tang P."/>
            <person name="Chu C."/>
            <person name="Hu S."/>
            <person name="Bao Q."/>
            <person name="Yu J."/>
            <person name="Chou Y.-Y."/>
            <person name="Wang H.-S."/>
            <person name="Lee Y.-S."/>
        </authorList>
    </citation>
    <scope>NUCLEOTIDE SEQUENCE [LARGE SCALE GENOMIC DNA]</scope>
    <source>
        <strain>SC-B67</strain>
    </source>
</reference>
<name>PAND_SALCH</name>
<sequence length="126" mass="13887">MIRTMLQGKLHRVKVTQADLHYEGSCAIDQDFLDASGILENEAIDIWNVTNGKRFSTYAIAAERGSRIISVNGAAAHCAEVGDIVIIASFVTMSDEEARTWRPKVAYFEGDNEMKRTAKAIPVQVA</sequence>
<organism>
    <name type="scientific">Salmonella choleraesuis (strain SC-B67)</name>
    <dbReference type="NCBI Taxonomy" id="321314"/>
    <lineage>
        <taxon>Bacteria</taxon>
        <taxon>Pseudomonadati</taxon>
        <taxon>Pseudomonadota</taxon>
        <taxon>Gammaproteobacteria</taxon>
        <taxon>Enterobacterales</taxon>
        <taxon>Enterobacteriaceae</taxon>
        <taxon>Salmonella</taxon>
    </lineage>
</organism>
<evidence type="ECO:0000255" key="1">
    <source>
        <dbReference type="HAMAP-Rule" id="MF_00446"/>
    </source>
</evidence>
<accession>Q57T75</accession>